<name>GET3_YEAST</name>
<comment type="function">
    <text evidence="1 3 6 8 12 13">ATPase required for the post-translational delivery of tail-anchored (TA) proteins to the endoplasmic reticulum. Recognizes and selectively binds the transmembrane domain of TA proteins in the cytosol. This complex then targets to the endoplasmic reticulum by membrane-bound receptors GET1 and GET2, where the tail-anchored protein is released for insertion. This process is regulated by ATP binding and hydrolysis. ATP binding drives the homodimer towards the closed dimer state, facilitating recognition of newly synthesized TA membrane proteins. ATP hydrolysis is required for insertion. Subsequently, the homodimer reverts towards the open dimer state, lowering its affinity for the GET1-GET2 receptor, and returning it to the cytosol to initiate a new round of targeting. Cooperates with the HDEL receptor ERD2 to mediate the ATP-dependent retrieval of resident ER proteins that contain a C-terminal H-D-E-L retention signal from the Golgi to the ER. Involved in low-level resistance to the oxyanions arsenite and arsenate, and in heat tolerance.</text>
</comment>
<comment type="subunit">
    <text evidence="1 2 3 5 6 7 9 10 11 12 13 15">Homodimer. Component of the Golgi to ER traffic (GET) complex, which is composed of GET1, GET2 and GET3. Within the complex, GET1 and GET2 form a heterotetramer which is stabilized by phosphatidylinositol binding and which binds to the GET3 homodimer (PubMed:32910895). Interacts with the chloride channel protein GEF1.</text>
</comment>
<comment type="interaction">
    <interactant intactId="EBI-2989">
        <id>Q12154</id>
    </interactant>
    <interactant intactId="EBI-7552">
        <id>P37020</id>
        <label>GEF1</label>
    </interactant>
    <organismsDiffer>false</organismsDiffer>
    <experiments>6</experiments>
</comment>
<comment type="interaction">
    <interactant intactId="EBI-2989">
        <id>Q12154</id>
    </interactant>
    <interactant intactId="EBI-23722">
        <id>P53192</id>
        <label>GET1</label>
    </interactant>
    <organismsDiffer>false</organismsDiffer>
    <experiments>13</experiments>
</comment>
<comment type="interaction">
    <interactant intactId="EBI-2989">
        <id>Q12154</id>
    </interactant>
    <interactant intactId="EBI-22604">
        <id>P40056</id>
        <label>GET2</label>
    </interactant>
    <organismsDiffer>false</organismsDiffer>
    <experiments>10</experiments>
</comment>
<comment type="interaction">
    <interactant intactId="EBI-2989">
        <id>Q12154</id>
    </interactant>
    <interactant intactId="EBI-2989">
        <id>Q12154</id>
        <label>GET3</label>
    </interactant>
    <organismsDiffer>false</organismsDiffer>
    <experiments>12</experiments>
</comment>
<comment type="interaction">
    <interactant intactId="EBI-2989">
        <id>Q12154</id>
    </interactant>
    <interactant intactId="EBI-36940">
        <id>Q12125</id>
        <label>GET4</label>
    </interactant>
    <organismsDiffer>false</organismsDiffer>
    <experiments>11</experiments>
</comment>
<comment type="interaction">
    <interactant intactId="EBI-2989">
        <id>Q12154</id>
    </interactant>
    <interactant intactId="EBI-34904">
        <id>Q12285</id>
        <label>MDY2</label>
    </interactant>
    <organismsDiffer>false</organismsDiffer>
    <experiments>10</experiments>
</comment>
<comment type="interaction">
    <interactant intactId="EBI-2989">
        <id>Q12154</id>
    </interactant>
    <interactant intactId="EBI-35465">
        <id>Q12255</id>
        <label>NYV1</label>
    </interactant>
    <organismsDiffer>false</organismsDiffer>
    <experiments>3</experiments>
</comment>
<comment type="interaction">
    <interactant intactId="EBI-2989">
        <id>Q12154</id>
    </interactant>
    <interactant intactId="EBI-13098">
        <id>P32854</id>
        <label>PEP12</label>
    </interactant>
    <organismsDiffer>false</organismsDiffer>
    <experiments>5</experiments>
</comment>
<comment type="interaction">
    <interactant intactId="EBI-2989">
        <id>Q12154</id>
    </interactant>
    <interactant intactId="EBI-16577">
        <id>P22214</id>
        <label>SEC22</label>
    </interactant>
    <organismsDiffer>false</organismsDiffer>
    <experiments>7</experiments>
</comment>
<comment type="interaction">
    <interactant intactId="EBI-2989">
        <id>Q12154</id>
    </interactant>
    <interactant intactId="EBI-1788819">
        <id>P60468</id>
        <label>SEC61B</label>
    </interactant>
    <organismsDiffer>true</organismsDiffer>
    <experiments>4</experiments>
</comment>
<comment type="subcellular location">
    <subcellularLocation>
        <location>Cytoplasm</location>
    </subcellularLocation>
    <subcellularLocation>
        <location evidence="14">Endoplasmic reticulum</location>
    </subcellularLocation>
    <subcellularLocation>
        <location>Golgi apparatus</location>
    </subcellularLocation>
    <text>GET1 and GET2 are required for targeting GET3 to the endoplasmic reticulum.</text>
</comment>
<comment type="miscellaneous">
    <text evidence="4">Present with 17300 molecules/cell in log phase SD medium.</text>
</comment>
<comment type="similarity">
    <text evidence="1">Belongs to the arsA ATPase family.</text>
</comment>
<keyword id="KW-0002">3D-structure</keyword>
<keyword id="KW-0059">Arsenical resistance</keyword>
<keyword id="KW-0067">ATP-binding</keyword>
<keyword id="KW-0963">Cytoplasm</keyword>
<keyword id="KW-0256">Endoplasmic reticulum</keyword>
<keyword id="KW-0931">ER-Golgi transport</keyword>
<keyword id="KW-0333">Golgi apparatus</keyword>
<keyword id="KW-0378">Hydrolase</keyword>
<keyword id="KW-0479">Metal-binding</keyword>
<keyword id="KW-0547">Nucleotide-binding</keyword>
<keyword id="KW-1185">Reference proteome</keyword>
<keyword id="KW-0813">Transport</keyword>
<keyword id="KW-0862">Zinc</keyword>
<feature type="chain" id="PRO_0000152256" description="ATPase GET3">
    <location>
        <begin position="1"/>
        <end position="354"/>
    </location>
</feature>
<feature type="active site">
    <location>
        <position position="57"/>
    </location>
</feature>
<feature type="binding site">
    <location>
        <begin position="26"/>
        <end position="33"/>
    </location>
    <ligand>
        <name>ATP</name>
        <dbReference type="ChEBI" id="CHEBI:30616"/>
    </ligand>
</feature>
<feature type="binding site">
    <location>
        <position position="245"/>
    </location>
    <ligand>
        <name>ATP</name>
        <dbReference type="ChEBI" id="CHEBI:30616"/>
    </ligand>
</feature>
<feature type="binding site">
    <location>
        <position position="272"/>
    </location>
    <ligand>
        <name>ATP</name>
        <dbReference type="ChEBI" id="CHEBI:30616"/>
    </ligand>
</feature>
<feature type="binding site" evidence="1 9">
    <location>
        <position position="285"/>
    </location>
    <ligand>
        <name>Zn(2+)</name>
        <dbReference type="ChEBI" id="CHEBI:29105"/>
        <note>ligand shared between dimeric partners</note>
    </ligand>
</feature>
<feature type="binding site" evidence="1 9">
    <location>
        <position position="288"/>
    </location>
    <ligand>
        <name>Zn(2+)</name>
        <dbReference type="ChEBI" id="CHEBI:29105"/>
        <note>ligand shared between dimeric partners</note>
    </ligand>
</feature>
<feature type="binding site">
    <location>
        <begin position="315"/>
        <end position="322"/>
    </location>
    <ligand>
        <name>ATP</name>
        <dbReference type="ChEBI" id="CHEBI:30616"/>
    </ligand>
</feature>
<feature type="mutagenesis site" description="Abolishes ATPase activity, leading to secretion of resident ER proteins." evidence="3 10">
    <original>G</original>
    <variation>R</variation>
    <location>
        <position position="30"/>
    </location>
</feature>
<feature type="mutagenesis site" description="Abolishes ATP hydrolysis." evidence="9">
    <original>D</original>
    <variation>N</variation>
    <location>
        <position position="57"/>
    </location>
</feature>
<feature type="mutagenesis site" description="Prevents dimerization; when associated with S-288." evidence="9">
    <original>C</original>
    <variation>S</variation>
    <location>
        <position position="285"/>
    </location>
</feature>
<feature type="mutagenesis site" description="Prevents dimerization; when associated with S-285." evidence="9">
    <original>C</original>
    <variation>S</variation>
    <location>
        <position position="288"/>
    </location>
</feature>
<feature type="sequence conflict" description="In Ref. 4; AAT93183." evidence="16" ref="4">
    <original>A</original>
    <variation>T</variation>
    <location>
        <position position="43"/>
    </location>
</feature>
<feature type="strand" evidence="21">
    <location>
        <begin position="7"/>
        <end position="9"/>
    </location>
</feature>
<feature type="helix" evidence="17">
    <location>
        <begin position="10"/>
        <end position="13"/>
    </location>
</feature>
<feature type="strand" evidence="17">
    <location>
        <begin position="20"/>
        <end position="26"/>
    </location>
</feature>
<feature type="strand" evidence="19">
    <location>
        <begin position="27"/>
        <end position="30"/>
    </location>
</feature>
<feature type="helix" evidence="17">
    <location>
        <begin position="31"/>
        <end position="45"/>
    </location>
</feature>
<feature type="strand" evidence="18">
    <location>
        <begin position="47"/>
        <end position="49"/>
    </location>
</feature>
<feature type="strand" evidence="17">
    <location>
        <begin position="51"/>
        <end position="55"/>
    </location>
</feature>
<feature type="strand" evidence="20">
    <location>
        <begin position="57"/>
        <end position="59"/>
    </location>
</feature>
<feature type="helix" evidence="17">
    <location>
        <begin position="62"/>
        <end position="66"/>
    </location>
</feature>
<feature type="strand" evidence="17">
    <location>
        <begin position="81"/>
        <end position="87"/>
    </location>
</feature>
<feature type="helix" evidence="17">
    <location>
        <begin position="90"/>
        <end position="98"/>
    </location>
</feature>
<feature type="turn" evidence="18">
    <location>
        <begin position="102"/>
        <end position="104"/>
    </location>
</feature>
<feature type="strand" evidence="19">
    <location>
        <begin position="114"/>
        <end position="116"/>
    </location>
</feature>
<feature type="helix" evidence="19">
    <location>
        <begin position="117"/>
        <end position="120"/>
    </location>
</feature>
<feature type="helix" evidence="19">
    <location>
        <begin position="122"/>
        <end position="124"/>
    </location>
</feature>
<feature type="helix" evidence="17">
    <location>
        <begin position="125"/>
        <end position="130"/>
    </location>
</feature>
<feature type="helix" evidence="17">
    <location>
        <begin position="136"/>
        <end position="153"/>
    </location>
</feature>
<feature type="strand" evidence="19">
    <location>
        <begin position="155"/>
        <end position="157"/>
    </location>
</feature>
<feature type="strand" evidence="17">
    <location>
        <begin position="161"/>
        <end position="166"/>
    </location>
</feature>
<feature type="helix" evidence="17">
    <location>
        <begin position="170"/>
        <end position="177"/>
    </location>
</feature>
<feature type="helix" evidence="17">
    <location>
        <begin position="179"/>
        <end position="188"/>
    </location>
</feature>
<feature type="helix" evidence="19">
    <location>
        <begin position="191"/>
        <end position="194"/>
    </location>
</feature>
<feature type="strand" evidence="18">
    <location>
        <begin position="195"/>
        <end position="197"/>
    </location>
</feature>
<feature type="helix" evidence="19">
    <location>
        <begin position="200"/>
        <end position="205"/>
    </location>
</feature>
<feature type="turn" evidence="19">
    <location>
        <begin position="206"/>
        <end position="208"/>
    </location>
</feature>
<feature type="helix" evidence="17">
    <location>
        <begin position="213"/>
        <end position="230"/>
    </location>
</feature>
<feature type="turn" evidence="17">
    <location>
        <begin position="233"/>
        <end position="235"/>
    </location>
</feature>
<feature type="strand" evidence="17">
    <location>
        <begin position="236"/>
        <end position="245"/>
    </location>
</feature>
<feature type="helix" evidence="17">
    <location>
        <begin position="246"/>
        <end position="261"/>
    </location>
</feature>
<feature type="strand" evidence="17">
    <location>
        <begin position="268"/>
        <end position="274"/>
    </location>
</feature>
<feature type="turn" evidence="19">
    <location>
        <begin position="277"/>
        <end position="281"/>
    </location>
</feature>
<feature type="helix" evidence="17">
    <location>
        <begin position="286"/>
        <end position="305"/>
    </location>
</feature>
<feature type="turn" evidence="17">
    <location>
        <begin position="306"/>
        <end position="308"/>
    </location>
</feature>
<feature type="strand" evidence="17">
    <location>
        <begin position="309"/>
        <end position="315"/>
    </location>
</feature>
<feature type="helix" evidence="17">
    <location>
        <begin position="323"/>
        <end position="335"/>
    </location>
</feature>
<feature type="helix" evidence="17">
    <location>
        <begin position="340"/>
        <end position="343"/>
    </location>
</feature>
<feature type="helix" evidence="17">
    <location>
        <begin position="344"/>
        <end position="350"/>
    </location>
</feature>
<accession>Q12154</accession>
<accession>D6VRQ0</accession>
<accession>Q6B1B6</accession>
<evidence type="ECO:0000255" key="1">
    <source>
        <dbReference type="HAMAP-Rule" id="MF_03112"/>
    </source>
</evidence>
<evidence type="ECO:0000269" key="2">
    <source>
    </source>
</evidence>
<evidence type="ECO:0000269" key="3">
    <source>
    </source>
</evidence>
<evidence type="ECO:0000269" key="4">
    <source>
    </source>
</evidence>
<evidence type="ECO:0000269" key="5">
    <source>
    </source>
</evidence>
<evidence type="ECO:0000269" key="6">
    <source>
    </source>
</evidence>
<evidence type="ECO:0000269" key="7">
    <source>
    </source>
</evidence>
<evidence type="ECO:0000269" key="8">
    <source>
    </source>
</evidence>
<evidence type="ECO:0000269" key="9">
    <source>
    </source>
</evidence>
<evidence type="ECO:0000269" key="10">
    <source>
    </source>
</evidence>
<evidence type="ECO:0000269" key="11">
    <source>
    </source>
</evidence>
<evidence type="ECO:0000269" key="12">
    <source>
    </source>
</evidence>
<evidence type="ECO:0000269" key="13">
    <source>
    </source>
</evidence>
<evidence type="ECO:0000269" key="14">
    <source>
    </source>
</evidence>
<evidence type="ECO:0000269" key="15">
    <source>
    </source>
</evidence>
<evidence type="ECO:0000305" key="16"/>
<evidence type="ECO:0007829" key="17">
    <source>
        <dbReference type="PDB" id="2WOJ"/>
    </source>
</evidence>
<evidence type="ECO:0007829" key="18">
    <source>
        <dbReference type="PDB" id="3B2E"/>
    </source>
</evidence>
<evidence type="ECO:0007829" key="19">
    <source>
        <dbReference type="PDB" id="3H84"/>
    </source>
</evidence>
<evidence type="ECO:0007829" key="20">
    <source>
        <dbReference type="PDB" id="4XVU"/>
    </source>
</evidence>
<evidence type="ECO:0007829" key="21">
    <source>
        <dbReference type="PDB" id="4XWO"/>
    </source>
</evidence>
<sequence>MDLTVEPNLHSLITSTTHKWIFVGGKGGVGKTTSSCSIAIQMALSQPNKQFLLISTDPAHNLSDAFGEKFGKDARKVTGMNNLSCMEIDPSAALKDMNDMAVSRANNNGSDGQGDDLGSLLQGGALADLTGSIPGIDEALSFMEVMKHIKRQEQGEGETFDTVIFDTAPTGHTLRFLQLPNTLSKLLEKFGEITNKLGPMLNSFMGAGNVDISGKLNELKANVETIRQQFTDPDLTTFVCVCISEFLSLYETERLIQELISYDMDVNSIIVNQLLFAENDQEHNCKRCQARWKMQKKYLDQIDELYEDFHVVKMPLCAGEIRGLNNLTKFSQFLNKEYNPITDGKVIYELEDKE</sequence>
<organism>
    <name type="scientific">Saccharomyces cerevisiae (strain ATCC 204508 / S288c)</name>
    <name type="common">Baker's yeast</name>
    <dbReference type="NCBI Taxonomy" id="559292"/>
    <lineage>
        <taxon>Eukaryota</taxon>
        <taxon>Fungi</taxon>
        <taxon>Dikarya</taxon>
        <taxon>Ascomycota</taxon>
        <taxon>Saccharomycotina</taxon>
        <taxon>Saccharomycetes</taxon>
        <taxon>Saccharomycetales</taxon>
        <taxon>Saccharomycetaceae</taxon>
        <taxon>Saccharomyces</taxon>
    </lineage>
</organism>
<reference key="1">
    <citation type="journal article" date="1996" name="Yeast">
        <title>The sequence of a 16,691 bp segment of Saccharomyces cerevisiae chromosome IV identifies the DUN1, PMT1, PMT5, SRP14 and DPR1 genes, and five new open reading frames.</title>
        <authorList>
            <person name="Boskovic J."/>
            <person name="Soler-Mira A."/>
            <person name="Garcia-Cantalejo J.M."/>
            <person name="Ballesta J.P.G."/>
            <person name="Jimenez A."/>
            <person name="Remacha M.A."/>
        </authorList>
    </citation>
    <scope>NUCLEOTIDE SEQUENCE [GENOMIC DNA]</scope>
    <source>
        <strain>ATCC 96604 / S288c / FY1679</strain>
    </source>
</reference>
<reference key="2">
    <citation type="journal article" date="1997" name="Nature">
        <title>The nucleotide sequence of Saccharomyces cerevisiae chromosome IV.</title>
        <authorList>
            <person name="Jacq C."/>
            <person name="Alt-Moerbe J."/>
            <person name="Andre B."/>
            <person name="Arnold W."/>
            <person name="Bahr A."/>
            <person name="Ballesta J.P.G."/>
            <person name="Bargues M."/>
            <person name="Baron L."/>
            <person name="Becker A."/>
            <person name="Biteau N."/>
            <person name="Bloecker H."/>
            <person name="Blugeon C."/>
            <person name="Boskovic J."/>
            <person name="Brandt P."/>
            <person name="Brueckner M."/>
            <person name="Buitrago M.J."/>
            <person name="Coster F."/>
            <person name="Delaveau T."/>
            <person name="del Rey F."/>
            <person name="Dujon B."/>
            <person name="Eide L.G."/>
            <person name="Garcia-Cantalejo J.M."/>
            <person name="Goffeau A."/>
            <person name="Gomez-Peris A."/>
            <person name="Granotier C."/>
            <person name="Hanemann V."/>
            <person name="Hankeln T."/>
            <person name="Hoheisel J.D."/>
            <person name="Jaeger W."/>
            <person name="Jimenez A."/>
            <person name="Jonniaux J.-L."/>
            <person name="Kraemer C."/>
            <person name="Kuester H."/>
            <person name="Laamanen P."/>
            <person name="Legros Y."/>
            <person name="Louis E.J."/>
            <person name="Moeller-Rieker S."/>
            <person name="Monnet A."/>
            <person name="Moro M."/>
            <person name="Mueller-Auer S."/>
            <person name="Nussbaumer B."/>
            <person name="Paricio N."/>
            <person name="Paulin L."/>
            <person name="Perea J."/>
            <person name="Perez-Alonso M."/>
            <person name="Perez-Ortin J.E."/>
            <person name="Pohl T.M."/>
            <person name="Prydz H."/>
            <person name="Purnelle B."/>
            <person name="Rasmussen S.W."/>
            <person name="Remacha M.A."/>
            <person name="Revuelta J.L."/>
            <person name="Rieger M."/>
            <person name="Salom D."/>
            <person name="Saluz H.P."/>
            <person name="Saiz J.E."/>
            <person name="Saren A.-M."/>
            <person name="Schaefer M."/>
            <person name="Scharfe M."/>
            <person name="Schmidt E.R."/>
            <person name="Schneider C."/>
            <person name="Scholler P."/>
            <person name="Schwarz S."/>
            <person name="Soler-Mira A."/>
            <person name="Urrestarazu L.A."/>
            <person name="Verhasselt P."/>
            <person name="Vissers S."/>
            <person name="Voet M."/>
            <person name="Volckaert G."/>
            <person name="Wagner G."/>
            <person name="Wambutt R."/>
            <person name="Wedler E."/>
            <person name="Wedler H."/>
            <person name="Woelfl S."/>
            <person name="Harris D.E."/>
            <person name="Bowman S."/>
            <person name="Brown D."/>
            <person name="Churcher C.M."/>
            <person name="Connor R."/>
            <person name="Dedman K."/>
            <person name="Gentles S."/>
            <person name="Hamlin N."/>
            <person name="Hunt S."/>
            <person name="Jones L."/>
            <person name="McDonald S."/>
            <person name="Murphy L.D."/>
            <person name="Niblett D."/>
            <person name="Odell C."/>
            <person name="Oliver K."/>
            <person name="Rajandream M.A."/>
            <person name="Richards C."/>
            <person name="Shore L."/>
            <person name="Walsh S.V."/>
            <person name="Barrell B.G."/>
            <person name="Dietrich F.S."/>
            <person name="Mulligan J.T."/>
            <person name="Allen E."/>
            <person name="Araujo R."/>
            <person name="Aviles E."/>
            <person name="Berno A."/>
            <person name="Carpenter J."/>
            <person name="Chen E."/>
            <person name="Cherry J.M."/>
            <person name="Chung E."/>
            <person name="Duncan M."/>
            <person name="Hunicke-Smith S."/>
            <person name="Hyman R.W."/>
            <person name="Komp C."/>
            <person name="Lashkari D."/>
            <person name="Lew H."/>
            <person name="Lin D."/>
            <person name="Mosedale D."/>
            <person name="Nakahara K."/>
            <person name="Namath A."/>
            <person name="Oefner P."/>
            <person name="Oh C."/>
            <person name="Petel F.X."/>
            <person name="Roberts D."/>
            <person name="Schramm S."/>
            <person name="Schroeder M."/>
            <person name="Shogren T."/>
            <person name="Shroff N."/>
            <person name="Winant A."/>
            <person name="Yelton M.A."/>
            <person name="Botstein D."/>
            <person name="Davis R.W."/>
            <person name="Johnston M."/>
            <person name="Andrews S."/>
            <person name="Brinkman R."/>
            <person name="Cooper J."/>
            <person name="Ding H."/>
            <person name="Du Z."/>
            <person name="Favello A."/>
            <person name="Fulton L."/>
            <person name="Gattung S."/>
            <person name="Greco T."/>
            <person name="Hallsworth K."/>
            <person name="Hawkins J."/>
            <person name="Hillier L.W."/>
            <person name="Jier M."/>
            <person name="Johnson D."/>
            <person name="Johnston L."/>
            <person name="Kirsten J."/>
            <person name="Kucaba T."/>
            <person name="Langston Y."/>
            <person name="Latreille P."/>
            <person name="Le T."/>
            <person name="Mardis E."/>
            <person name="Menezes S."/>
            <person name="Miller N."/>
            <person name="Nhan M."/>
            <person name="Pauley A."/>
            <person name="Peluso D."/>
            <person name="Rifkin L."/>
            <person name="Riles L."/>
            <person name="Taich A."/>
            <person name="Trevaskis E."/>
            <person name="Vignati D."/>
            <person name="Wilcox L."/>
            <person name="Wohldman P."/>
            <person name="Vaudin M."/>
            <person name="Wilson R."/>
            <person name="Waterston R."/>
            <person name="Albermann K."/>
            <person name="Hani J."/>
            <person name="Heumann K."/>
            <person name="Kleine K."/>
            <person name="Mewes H.-W."/>
            <person name="Zollner A."/>
            <person name="Zaccaria P."/>
        </authorList>
    </citation>
    <scope>NUCLEOTIDE SEQUENCE [LARGE SCALE GENOMIC DNA]</scope>
    <source>
        <strain>ATCC 204508 / S288c</strain>
    </source>
</reference>
<reference key="3">
    <citation type="journal article" date="2014" name="G3 (Bethesda)">
        <title>The reference genome sequence of Saccharomyces cerevisiae: Then and now.</title>
        <authorList>
            <person name="Engel S.R."/>
            <person name="Dietrich F.S."/>
            <person name="Fisk D.G."/>
            <person name="Binkley G."/>
            <person name="Balakrishnan R."/>
            <person name="Costanzo M.C."/>
            <person name="Dwight S.S."/>
            <person name="Hitz B.C."/>
            <person name="Karra K."/>
            <person name="Nash R.S."/>
            <person name="Weng S."/>
            <person name="Wong E.D."/>
            <person name="Lloyd P."/>
            <person name="Skrzypek M.S."/>
            <person name="Miyasato S.R."/>
            <person name="Simison M."/>
            <person name="Cherry J.M."/>
        </authorList>
    </citation>
    <scope>GENOME REANNOTATION</scope>
    <source>
        <strain>ATCC 204508 / S288c</strain>
    </source>
</reference>
<reference key="4">
    <citation type="journal article" date="2007" name="Genome Res.">
        <title>Approaching a complete repository of sequence-verified protein-encoding clones for Saccharomyces cerevisiae.</title>
        <authorList>
            <person name="Hu Y."/>
            <person name="Rolfs A."/>
            <person name="Bhullar B."/>
            <person name="Murthy T.V.S."/>
            <person name="Zhu C."/>
            <person name="Berger M.F."/>
            <person name="Camargo A.A."/>
            <person name="Kelley F."/>
            <person name="McCarron S."/>
            <person name="Jepson D."/>
            <person name="Richardson A."/>
            <person name="Raphael J."/>
            <person name="Moreira D."/>
            <person name="Taycher E."/>
            <person name="Zuo D."/>
            <person name="Mohr S."/>
            <person name="Kane M.F."/>
            <person name="Williamson J."/>
            <person name="Simpson A.J.G."/>
            <person name="Bulyk M.L."/>
            <person name="Harlow E."/>
            <person name="Marsischky G."/>
            <person name="Kolodner R.D."/>
            <person name="LaBaer J."/>
        </authorList>
    </citation>
    <scope>NUCLEOTIDE SEQUENCE [GENOMIC DNA]</scope>
    <source>
        <strain>ATCC 204508 / S288c</strain>
    </source>
</reference>
<reference key="5">
    <citation type="journal article" date="2002" name="Nature">
        <title>Systematic identification of protein complexes in Saccharomyces cerevisiae by mass spectrometry.</title>
        <authorList>
            <person name="Ho Y."/>
            <person name="Gruhler A."/>
            <person name="Heilbut A."/>
            <person name="Bader G.D."/>
            <person name="Moore L."/>
            <person name="Adams S.-L."/>
            <person name="Millar A."/>
            <person name="Taylor P."/>
            <person name="Bennett K."/>
            <person name="Boutilier K."/>
            <person name="Yang L."/>
            <person name="Wolting C."/>
            <person name="Donaldson I."/>
            <person name="Schandorff S."/>
            <person name="Shewnarane J."/>
            <person name="Vo M."/>
            <person name="Taggart J."/>
            <person name="Goudreault M."/>
            <person name="Muskat B."/>
            <person name="Alfarano C."/>
            <person name="Dewar D."/>
            <person name="Lin Z."/>
            <person name="Michalickova K."/>
            <person name="Willems A.R."/>
            <person name="Sassi H."/>
            <person name="Nielsen P.A."/>
            <person name="Rasmussen K.J."/>
            <person name="Andersen J.R."/>
            <person name="Johansen L.E."/>
            <person name="Hansen L.H."/>
            <person name="Jespersen H."/>
            <person name="Podtelejnikov A."/>
            <person name="Nielsen E."/>
            <person name="Crawford J."/>
            <person name="Poulsen V."/>
            <person name="Soerensen B.D."/>
            <person name="Matthiesen J."/>
            <person name="Hendrickson R.C."/>
            <person name="Gleeson F."/>
            <person name="Pawson T."/>
            <person name="Moran M.F."/>
            <person name="Durocher D."/>
            <person name="Mann M."/>
            <person name="Hogue C.W.V."/>
            <person name="Figeys D."/>
            <person name="Tyers M."/>
        </authorList>
    </citation>
    <scope>IDENTIFICATION IN GET COMPLEX</scope>
    <scope>IDENTIFICATION BY MASS SPECTROMETRY</scope>
</reference>
<reference key="6">
    <citation type="journal article" date="2003" name="BioMetals">
        <title>The Saccharomyces cerevisiae Arr4p is involved in metal and heat tolerance.</title>
        <authorList>
            <person name="Shen J."/>
            <person name="Hsu C.-M."/>
            <person name="Kang B.-K."/>
            <person name="Rosen B.P."/>
            <person name="Bhattacharjee H."/>
        </authorList>
    </citation>
    <scope>FUNCTION</scope>
    <scope>MUTAGENESIS OF GLY-30</scope>
    <scope>SUBUNIT</scope>
    <scope>SUBCELLULAR LOCATION</scope>
</reference>
<reference key="7">
    <citation type="journal article" date="2003" name="Nature">
        <title>Global analysis of protein localization in budding yeast.</title>
        <authorList>
            <person name="Huh W.-K."/>
            <person name="Falvo J.V."/>
            <person name="Gerke L.C."/>
            <person name="Carroll A.S."/>
            <person name="Howson R.W."/>
            <person name="Weissman J.S."/>
            <person name="O'Shea E.K."/>
        </authorList>
    </citation>
    <scope>SUBCELLULAR LOCATION [LARGE SCALE ANALYSIS]</scope>
</reference>
<reference key="8">
    <citation type="journal article" date="2003" name="Nature">
        <title>Global analysis of protein expression in yeast.</title>
        <authorList>
            <person name="Ghaemmaghami S."/>
            <person name="Huh W.-K."/>
            <person name="Bower K."/>
            <person name="Howson R.W."/>
            <person name="Belle A."/>
            <person name="Dephoure N."/>
            <person name="O'Shea E.K."/>
            <person name="Weissman J.S."/>
        </authorList>
    </citation>
    <scope>LEVEL OF PROTEIN EXPRESSION [LARGE SCALE ANALYSIS]</scope>
</reference>
<reference key="9">
    <citation type="journal article" date="2005" name="Cell">
        <title>Exploration of the function and organization of the yeast early secretory pathway through an epistatic miniarray profile.</title>
        <authorList>
            <person name="Schuldiner M."/>
            <person name="Collins S.R."/>
            <person name="Thompson N.J."/>
            <person name="Denic V."/>
            <person name="Bhamidipati A."/>
            <person name="Punna T."/>
            <person name="Ihmels J."/>
            <person name="Andrews B."/>
            <person name="Boone C."/>
            <person name="Greenblatt J.F."/>
            <person name="Weissman J.S."/>
            <person name="Krogan N.J."/>
        </authorList>
    </citation>
    <scope>FUNCTION</scope>
    <scope>IDENTIFICATION IN GET COMPLEX</scope>
    <scope>SUBCELLULAR LOCATION</scope>
    <scope>INTERACTION WITH GET1</scope>
</reference>
<reference key="10">
    <citation type="journal article" date="2006" name="Genetics">
        <title>The conserved ATPase Get3/Arr4 modulates the activity of membrane-associated proteins in Saccharomyces cerevisiae.</title>
        <authorList>
            <person name="Auld K.L."/>
            <person name="Hitchcock A.L."/>
            <person name="Doherty H.K."/>
            <person name="Frietze S."/>
            <person name="Huang L.S."/>
            <person name="Silver P.A."/>
        </authorList>
    </citation>
    <scope>INTERACTION WITH GET1 AND GET2</scope>
    <scope>SUBCELLULAR LOCATION</scope>
</reference>
<reference key="11">
    <citation type="journal article" date="2006" name="J. Biol. Chem.">
        <title>The yeast Arr4p ATPase binds the chloride transporter Gef1p when copper is available in the cytosol.</title>
        <authorList>
            <person name="Metz J."/>
            <person name="Waechter A."/>
            <person name="Schmidt B."/>
            <person name="Bujnicki J.M."/>
            <person name="Schwappach B."/>
        </authorList>
    </citation>
    <scope>INTERACTION WITH GEF1</scope>
    <scope>SUBUNIT</scope>
</reference>
<reference key="12">
    <citation type="journal article" date="2008" name="Cell">
        <title>The GET complex mediates insertion of tail-anchored proteins into the ER membrane.</title>
        <authorList>
            <person name="Schuldiner M."/>
            <person name="Metz J."/>
            <person name="Schmid V."/>
            <person name="Denic V."/>
            <person name="Rakwalska M."/>
            <person name="Schmitt H.D."/>
            <person name="Schwappach B."/>
            <person name="Weissman J.S."/>
        </authorList>
    </citation>
    <scope>FUNCTION</scope>
    <scope>SUBCELLULAR LOCATION</scope>
</reference>
<reference key="13">
    <citation type="journal article" date="2014" name="PLoS ONE">
        <title>WRB and CAML are necessary and sufficient to mediate tail-anchored protein targeting to the ER membrane.</title>
        <authorList>
            <person name="Vilardi F."/>
            <person name="Stephan M."/>
            <person name="Clancy A."/>
            <person name="Janshoff A."/>
            <person name="Schwappach B."/>
        </authorList>
    </citation>
    <scope>SUBCELLULAR LOCATION</scope>
</reference>
<reference key="14">
    <citation type="journal article" date="2009" name="Nature">
        <title>The structural basis of tail-anchored membrane protein recognition by Get3.</title>
        <authorList>
            <person name="Mateja A."/>
            <person name="Szlachcic A."/>
            <person name="Downing M.E."/>
            <person name="Dobosz M."/>
            <person name="Mariappan M."/>
            <person name="Hegde R.S."/>
            <person name="Keenan R.J."/>
        </authorList>
    </citation>
    <scope>X-RAY CRYSTALLOGRAPHY (1.99 ANGSTROMS) IN COMPLEX WITH ADP AND ZINC</scope>
    <scope>SUBUNIT</scope>
    <scope>MUTAGENESIS OF ASP-57; CYS-285 AND CYS-288</scope>
</reference>
<reference key="15">
    <citation type="journal article" date="2009" name="PLoS ONE">
        <title>The crystal structures of yeast Get3 suggest a mechanism for tail-anchored protein membrane insertion.</title>
        <authorList>
            <person name="Hu J."/>
            <person name="Li J."/>
            <person name="Qian X."/>
            <person name="Denic V."/>
            <person name="Sha B."/>
        </authorList>
    </citation>
    <scope>X-RAY CRYSTALLOGRAPHY (2.3 ANGSTROMS)</scope>
</reference>
<reference key="16">
    <citation type="journal article" date="2009" name="Proc. Natl. Acad. Sci. U.S.A.">
        <title>Model for eukaryotic tail-anchored protein binding based on the structure of Get3.</title>
        <authorList>
            <person name="Suloway C.J.M."/>
            <person name="Chartron J.W."/>
            <person name="Zaslaver M."/>
            <person name="Clemons W.M. Jr."/>
        </authorList>
    </citation>
    <scope>X-RAY CRYSTALLOGRAPHY (3.7 ANGSTROMS)</scope>
    <scope>SUBUNIT</scope>
    <scope>MUTAGENESIS OF GLY-30</scope>
</reference>
<reference key="17">
    <citation type="journal article" date="2010" name="Genes Cells">
        <title>Structural insight into the membrane insertion of tail-anchored proteins by Get3.</title>
        <authorList>
            <person name="Yamagata A."/>
            <person name="Mimura H."/>
            <person name="Sato Y."/>
            <person name="Yamashita M."/>
            <person name="Yoshikawa A."/>
            <person name="Fukai S."/>
        </authorList>
    </citation>
    <scope>X-RAY CRYSTALLOGRAPHY (2.8 ANGSTROMS) IN COMPLEX WITH ADP</scope>
</reference>
<reference key="18">
    <citation type="journal article" date="2011" name="Nature">
        <title>The mechanism of membrane-associated steps in tail-anchored protein insertion.</title>
        <authorList>
            <person name="Mariappan M."/>
            <person name="Mateja A."/>
            <person name="Dobosz M."/>
            <person name="Bove E."/>
            <person name="Hegde R.S."/>
            <person name="Keenan R.J."/>
        </authorList>
    </citation>
    <scope>X-RAY CRYSTALLOGRAPHY (2.1 ANGSTROMS) IN COMPLEX WITH GET2</scope>
    <scope>FUNCTION</scope>
    <scope>SUBUNIT</scope>
</reference>
<reference key="19">
    <citation type="journal article" date="2011" name="Science">
        <title>Structural basis for tail-anchored membrane protein biogenesis by the Get3-receptor complex.</title>
        <authorList>
            <person name="Stefer S."/>
            <person name="Reitz S."/>
            <person name="Wang F."/>
            <person name="Wild K."/>
            <person name="Pang Y.Y."/>
            <person name="Schwarz D."/>
            <person name="Bomke J."/>
            <person name="Hein C."/>
            <person name="Lohr F."/>
            <person name="Bernhard F."/>
            <person name="Denic V."/>
            <person name="Dotsch V."/>
            <person name="Sinning I."/>
        </authorList>
    </citation>
    <scope>X-RAY CRYSTALLOGRAPHY (3.2 ANGSTROMS) IN COMPLEX WITH GET1</scope>
    <scope>FUNCTION</scope>
    <scope>SUBUNIT</scope>
</reference>
<reference key="20">
    <citation type="journal article" date="2012" name="J. Mol. Biol.">
        <title>Get1 stabilizes an open dimer conformation of get3 ATPase by binding two distinct interfaces.</title>
        <authorList>
            <person name="Kubota K."/>
            <person name="Yamagata A."/>
            <person name="Sato Y."/>
            <person name="Goto-Ito S."/>
            <person name="Fukai S."/>
        </authorList>
    </citation>
    <scope>X-RAY CRYSTALLOGRAPHY (3.0 ANGSTROMS)</scope>
</reference>
<reference key="21">
    <citation type="journal article" date="2020" name="Mol. Cell">
        <title>Structural Basis of Tail-Anchored Membrane Protein Biogenesis by the GET Insertase Complex.</title>
        <authorList>
            <person name="McDowell M.A."/>
            <person name="Heimes M."/>
            <person name="Fiorentino F."/>
            <person name="Mehmood S."/>
            <person name="Farkas A."/>
            <person name="Coy-Vergara J."/>
            <person name="Wu D."/>
            <person name="Bolla J.R."/>
            <person name="Schmid V."/>
            <person name="Heinze R."/>
            <person name="Wild K."/>
            <person name="Flemming D."/>
            <person name="Pfeffer S."/>
            <person name="Schwappach B."/>
            <person name="Robinson C.V."/>
            <person name="Sinning I."/>
        </authorList>
    </citation>
    <scope>STRUCTURE BY ELECTRON MICROSCOPY (14 ANGSTROMS) OF THE GET COMPLEX</scope>
</reference>
<gene>
    <name evidence="1" type="primary">GET3</name>
    <name type="synonym">ARR4</name>
    <name type="ordered locus">YDL100C</name>
    <name type="ORF">D2371</name>
</gene>
<dbReference type="EC" id="3.6.-.-" evidence="1"/>
<dbReference type="EMBL" id="X95644">
    <property type="protein sequence ID" value="CAA64913.1"/>
    <property type="molecule type" value="Genomic_DNA"/>
</dbReference>
<dbReference type="EMBL" id="Z74148">
    <property type="protein sequence ID" value="CAA98667.1"/>
    <property type="molecule type" value="Genomic_DNA"/>
</dbReference>
<dbReference type="EMBL" id="AY693164">
    <property type="protein sequence ID" value="AAT93183.1"/>
    <property type="molecule type" value="Genomic_DNA"/>
</dbReference>
<dbReference type="EMBL" id="BK006938">
    <property type="protein sequence ID" value="DAA11760.1"/>
    <property type="molecule type" value="Genomic_DNA"/>
</dbReference>
<dbReference type="PIR" id="S67642">
    <property type="entry name" value="S67642"/>
</dbReference>
<dbReference type="RefSeq" id="NP_010183.1">
    <property type="nucleotide sequence ID" value="NM_001180159.1"/>
</dbReference>
<dbReference type="PDB" id="2WOJ">
    <property type="method" value="X-ray"/>
    <property type="resolution" value="1.99 A"/>
    <property type="chains" value="A/B/C/D=1-354"/>
</dbReference>
<dbReference type="PDB" id="3A36">
    <property type="method" value="X-ray"/>
    <property type="resolution" value="2.80 A"/>
    <property type="chains" value="A/B=1-354"/>
</dbReference>
<dbReference type="PDB" id="3A37">
    <property type="method" value="X-ray"/>
    <property type="resolution" value="3.00 A"/>
    <property type="chains" value="A/B=1-354"/>
</dbReference>
<dbReference type="PDB" id="3B2E">
    <property type="method" value="X-ray"/>
    <property type="resolution" value="3.00 A"/>
    <property type="chains" value="A/B/C/D=1-354"/>
</dbReference>
<dbReference type="PDB" id="3H84">
    <property type="method" value="X-ray"/>
    <property type="resolution" value="2.30 A"/>
    <property type="chains" value="A/B=1-354"/>
</dbReference>
<dbReference type="PDB" id="3IDQ">
    <property type="method" value="X-ray"/>
    <property type="resolution" value="3.70 A"/>
    <property type="chains" value="A=1-354"/>
</dbReference>
<dbReference type="PDB" id="3SJA">
    <property type="method" value="X-ray"/>
    <property type="resolution" value="3.00 A"/>
    <property type="chains" value="A/B/E/F/I=1-354"/>
</dbReference>
<dbReference type="PDB" id="3SJB">
    <property type="method" value="X-ray"/>
    <property type="resolution" value="3.30 A"/>
    <property type="chains" value="A/B=1-354"/>
</dbReference>
<dbReference type="PDB" id="3SJC">
    <property type="method" value="X-ray"/>
    <property type="resolution" value="3.20 A"/>
    <property type="chains" value="A/B/E/F=1-354"/>
</dbReference>
<dbReference type="PDB" id="3SJD">
    <property type="method" value="X-ray"/>
    <property type="resolution" value="4.60 A"/>
    <property type="chains" value="A/B/C=1-354"/>
</dbReference>
<dbReference type="PDB" id="3VLC">
    <property type="method" value="X-ray"/>
    <property type="resolution" value="4.50 A"/>
    <property type="chains" value="A=1-354"/>
</dbReference>
<dbReference type="PDB" id="3ZS8">
    <property type="method" value="X-ray"/>
    <property type="resolution" value="3.00 A"/>
    <property type="chains" value="A/B=1-354"/>
</dbReference>
<dbReference type="PDB" id="3ZS9">
    <property type="method" value="X-ray"/>
    <property type="resolution" value="2.10 A"/>
    <property type="chains" value="A/B=1-354"/>
</dbReference>
<dbReference type="PDB" id="4PWX">
    <property type="method" value="X-ray"/>
    <property type="resolution" value="5.40 A"/>
    <property type="chains" value="A/B=2-354"/>
</dbReference>
<dbReference type="PDB" id="4XTR">
    <property type="method" value="X-ray"/>
    <property type="resolution" value="2.05 A"/>
    <property type="chains" value="A/B=1-354"/>
</dbReference>
<dbReference type="PDB" id="4XVU">
    <property type="method" value="X-ray"/>
    <property type="resolution" value="2.35 A"/>
    <property type="chains" value="A/B/G/H=1-354"/>
</dbReference>
<dbReference type="PDB" id="4XWO">
    <property type="method" value="X-ray"/>
    <property type="resolution" value="2.75 A"/>
    <property type="chains" value="A/B/G/H/M/N/S/T=1-354"/>
</dbReference>
<dbReference type="PDB" id="5BW8">
    <property type="method" value="X-ray"/>
    <property type="resolution" value="2.80 A"/>
    <property type="chains" value="A/B=2-354"/>
</dbReference>
<dbReference type="PDB" id="5BWK">
    <property type="method" value="X-ray"/>
    <property type="resolution" value="6.00 A"/>
    <property type="chains" value="A/B/C/D/M/N/O/P=2-354"/>
</dbReference>
<dbReference type="PDBsum" id="2WOJ"/>
<dbReference type="PDBsum" id="3A36"/>
<dbReference type="PDBsum" id="3A37"/>
<dbReference type="PDBsum" id="3B2E"/>
<dbReference type="PDBsum" id="3H84"/>
<dbReference type="PDBsum" id="3IDQ"/>
<dbReference type="PDBsum" id="3SJA"/>
<dbReference type="PDBsum" id="3SJB"/>
<dbReference type="PDBsum" id="3SJC"/>
<dbReference type="PDBsum" id="3SJD"/>
<dbReference type="PDBsum" id="3VLC"/>
<dbReference type="PDBsum" id="3ZS8"/>
<dbReference type="PDBsum" id="3ZS9"/>
<dbReference type="PDBsum" id="4PWX"/>
<dbReference type="PDBsum" id="4XTR"/>
<dbReference type="PDBsum" id="4XVU"/>
<dbReference type="PDBsum" id="4XWO"/>
<dbReference type="PDBsum" id="5BW8"/>
<dbReference type="PDBsum" id="5BWK"/>
<dbReference type="SMR" id="Q12154"/>
<dbReference type="BioGRID" id="31962">
    <property type="interactions" value="491"/>
</dbReference>
<dbReference type="ComplexPortal" id="CPX-956">
    <property type="entry name" value="GET complex"/>
</dbReference>
<dbReference type="DIP" id="DIP-3908N"/>
<dbReference type="FunCoup" id="Q12154">
    <property type="interactions" value="1167"/>
</dbReference>
<dbReference type="IntAct" id="Q12154">
    <property type="interactions" value="60"/>
</dbReference>
<dbReference type="MINT" id="Q12154"/>
<dbReference type="STRING" id="4932.YDL100C"/>
<dbReference type="TCDB" id="3.A.21.1.1">
    <property type="family name" value="the c-terminal tail-anchored membrane protein biogenesis/ insertion complex (tamp-b) family"/>
</dbReference>
<dbReference type="iPTMnet" id="Q12154"/>
<dbReference type="PaxDb" id="4932-YDL100C"/>
<dbReference type="PeptideAtlas" id="Q12154"/>
<dbReference type="ABCD" id="Q12154">
    <property type="antibodies" value="1 sequenced antibody"/>
</dbReference>
<dbReference type="EnsemblFungi" id="YDL100C_mRNA">
    <property type="protein sequence ID" value="YDL100C"/>
    <property type="gene ID" value="YDL100C"/>
</dbReference>
<dbReference type="GeneID" id="851458"/>
<dbReference type="KEGG" id="sce:YDL100C"/>
<dbReference type="AGR" id="SGD:S000002258"/>
<dbReference type="SGD" id="S000002258">
    <property type="gene designation" value="GET3"/>
</dbReference>
<dbReference type="VEuPathDB" id="FungiDB:YDL100C"/>
<dbReference type="eggNOG" id="KOG2825">
    <property type="taxonomic scope" value="Eukaryota"/>
</dbReference>
<dbReference type="GeneTree" id="ENSGT00390000003817"/>
<dbReference type="HOGENOM" id="CLU_040761_0_0_1"/>
<dbReference type="InParanoid" id="Q12154"/>
<dbReference type="OMA" id="MDAPYEF"/>
<dbReference type="OrthoDB" id="1770at2759"/>
<dbReference type="BioCyc" id="YEAST:G3O-29503-MONOMER"/>
<dbReference type="BioGRID-ORCS" id="851458">
    <property type="hits" value="5 hits in 10 CRISPR screens"/>
</dbReference>
<dbReference type="EvolutionaryTrace" id="Q12154"/>
<dbReference type="PRO" id="PR:Q12154"/>
<dbReference type="Proteomes" id="UP000002311">
    <property type="component" value="Chromosome IV"/>
</dbReference>
<dbReference type="RNAct" id="Q12154">
    <property type="molecule type" value="protein"/>
</dbReference>
<dbReference type="GO" id="GO:0005829">
    <property type="term" value="C:cytosol"/>
    <property type="evidence" value="ECO:0007005"/>
    <property type="project" value="SGD"/>
</dbReference>
<dbReference type="GO" id="GO:0005783">
    <property type="term" value="C:endoplasmic reticulum"/>
    <property type="evidence" value="ECO:0007005"/>
    <property type="project" value="SGD"/>
</dbReference>
<dbReference type="GO" id="GO:0005789">
    <property type="term" value="C:endoplasmic reticulum membrane"/>
    <property type="evidence" value="ECO:0000303"/>
    <property type="project" value="ComplexPortal"/>
</dbReference>
<dbReference type="GO" id="GO:0043529">
    <property type="term" value="C:GET complex"/>
    <property type="evidence" value="ECO:0000314"/>
    <property type="project" value="UniProtKB"/>
</dbReference>
<dbReference type="GO" id="GO:0005794">
    <property type="term" value="C:Golgi apparatus"/>
    <property type="evidence" value="ECO:0007669"/>
    <property type="project" value="UniProtKB-SubCell"/>
</dbReference>
<dbReference type="GO" id="GO:0005524">
    <property type="term" value="F:ATP binding"/>
    <property type="evidence" value="ECO:0007669"/>
    <property type="project" value="UniProtKB-UniRule"/>
</dbReference>
<dbReference type="GO" id="GO:0016887">
    <property type="term" value="F:ATP hydrolysis activity"/>
    <property type="evidence" value="ECO:0000314"/>
    <property type="project" value="SGD"/>
</dbReference>
<dbReference type="GO" id="GO:0005085">
    <property type="term" value="F:guanyl-nucleotide exchange factor activity"/>
    <property type="evidence" value="ECO:0000314"/>
    <property type="project" value="SGD"/>
</dbReference>
<dbReference type="GO" id="GO:0042802">
    <property type="term" value="F:identical protein binding"/>
    <property type="evidence" value="ECO:0000353"/>
    <property type="project" value="IntAct"/>
</dbReference>
<dbReference type="GO" id="GO:0046872">
    <property type="term" value="F:metal ion binding"/>
    <property type="evidence" value="ECO:0007669"/>
    <property type="project" value="UniProtKB-KW"/>
</dbReference>
<dbReference type="GO" id="GO:0044183">
    <property type="term" value="F:protein folding chaperone"/>
    <property type="evidence" value="ECO:0000314"/>
    <property type="project" value="SGD"/>
</dbReference>
<dbReference type="GO" id="GO:0051082">
    <property type="term" value="F:unfolded protein binding"/>
    <property type="evidence" value="ECO:0000314"/>
    <property type="project" value="SGD"/>
</dbReference>
<dbReference type="GO" id="GO:0034599">
    <property type="term" value="P:cellular response to oxidative stress"/>
    <property type="evidence" value="ECO:0000314"/>
    <property type="project" value="SGD"/>
</dbReference>
<dbReference type="GO" id="GO:0000750">
    <property type="term" value="P:pheromone-dependent signal transduction involved in conjugation with cellular fusion"/>
    <property type="evidence" value="ECO:0000315"/>
    <property type="project" value="SGD"/>
</dbReference>
<dbReference type="GO" id="GO:0006620">
    <property type="term" value="P:post-translational protein targeting to endoplasmic reticulum membrane"/>
    <property type="evidence" value="ECO:0000314"/>
    <property type="project" value="SGD"/>
</dbReference>
<dbReference type="GO" id="GO:0045048">
    <property type="term" value="P:protein insertion into ER membrane"/>
    <property type="evidence" value="ECO:0000314"/>
    <property type="project" value="ComplexPortal"/>
</dbReference>
<dbReference type="GO" id="GO:0046685">
    <property type="term" value="P:response to arsenic-containing substance"/>
    <property type="evidence" value="ECO:0007669"/>
    <property type="project" value="UniProtKB-KW"/>
</dbReference>
<dbReference type="GO" id="GO:0009408">
    <property type="term" value="P:response to heat"/>
    <property type="evidence" value="ECO:0000315"/>
    <property type="project" value="SGD"/>
</dbReference>
<dbReference type="GO" id="GO:0010038">
    <property type="term" value="P:response to metal ion"/>
    <property type="evidence" value="ECO:0000315"/>
    <property type="project" value="SGD"/>
</dbReference>
<dbReference type="GO" id="GO:0006890">
    <property type="term" value="P:retrograde vesicle-mediated transport, Golgi to endoplasmic reticulum"/>
    <property type="evidence" value="ECO:0000314"/>
    <property type="project" value="SGD"/>
</dbReference>
<dbReference type="GO" id="GO:0071816">
    <property type="term" value="P:tail-anchored membrane protein insertion into ER membrane"/>
    <property type="evidence" value="ECO:0000315"/>
    <property type="project" value="SGD"/>
</dbReference>
<dbReference type="CDD" id="cd02035">
    <property type="entry name" value="ArsA"/>
    <property type="match status" value="1"/>
</dbReference>
<dbReference type="FunFam" id="3.40.50.300:FF:001359">
    <property type="entry name" value="ATPase GET3"/>
    <property type="match status" value="1"/>
</dbReference>
<dbReference type="Gene3D" id="3.40.50.300">
    <property type="entry name" value="P-loop containing nucleotide triphosphate hydrolases"/>
    <property type="match status" value="1"/>
</dbReference>
<dbReference type="HAMAP" id="MF_03112">
    <property type="entry name" value="Asna1_Get3"/>
    <property type="match status" value="1"/>
</dbReference>
<dbReference type="InterPro" id="IPR025723">
    <property type="entry name" value="Anion-transp_ATPase-like_dom"/>
</dbReference>
<dbReference type="InterPro" id="IPR016300">
    <property type="entry name" value="ATPase_ArsA/GET3"/>
</dbReference>
<dbReference type="InterPro" id="IPR027542">
    <property type="entry name" value="ATPase_ArsA/GET3_euk"/>
</dbReference>
<dbReference type="InterPro" id="IPR027417">
    <property type="entry name" value="P-loop_NTPase"/>
</dbReference>
<dbReference type="NCBIfam" id="TIGR00345">
    <property type="entry name" value="GET3_arsA_TRC40"/>
    <property type="match status" value="1"/>
</dbReference>
<dbReference type="PANTHER" id="PTHR10803">
    <property type="entry name" value="ARSENICAL PUMP-DRIVING ATPASE ARSENITE-TRANSLOCATING ATPASE"/>
    <property type="match status" value="1"/>
</dbReference>
<dbReference type="PANTHER" id="PTHR10803:SF3">
    <property type="entry name" value="ATPASE GET3"/>
    <property type="match status" value="1"/>
</dbReference>
<dbReference type="Pfam" id="PF02374">
    <property type="entry name" value="ArsA_ATPase"/>
    <property type="match status" value="1"/>
</dbReference>
<dbReference type="SUPFAM" id="SSF52540">
    <property type="entry name" value="P-loop containing nucleoside triphosphate hydrolases"/>
    <property type="match status" value="1"/>
</dbReference>
<proteinExistence type="evidence at protein level"/>
<protein>
    <recommendedName>
        <fullName evidence="1">ATPase GET3</fullName>
        <ecNumber evidence="1">3.6.-.-</ecNumber>
    </recommendedName>
    <alternativeName>
        <fullName evidence="1">Arsenical pump-driving ATPase</fullName>
    </alternativeName>
    <alternativeName>
        <fullName evidence="1">Arsenite-stimulated ATPase</fullName>
    </alternativeName>
    <alternativeName>
        <fullName evidence="1">Golgi to ER traffic protein 3</fullName>
    </alternativeName>
    <alternativeName>
        <fullName evidence="1">Guided entry of tail-anchored proteins 3</fullName>
    </alternativeName>
</protein>